<dbReference type="EMBL" id="AB024029">
    <property type="protein sequence ID" value="BAB10998.1"/>
    <property type="molecule type" value="Genomic_DNA"/>
</dbReference>
<dbReference type="EMBL" id="CP002688">
    <property type="protein sequence ID" value="AED96994.1"/>
    <property type="molecule type" value="Genomic_DNA"/>
</dbReference>
<dbReference type="EMBL" id="AY062789">
    <property type="protein sequence ID" value="AAL32867.1"/>
    <property type="molecule type" value="mRNA"/>
</dbReference>
<dbReference type="EMBL" id="AY081612">
    <property type="protein sequence ID" value="AAM10174.1"/>
    <property type="molecule type" value="mRNA"/>
</dbReference>
<dbReference type="EMBL" id="AY085685">
    <property type="protein sequence ID" value="AAM62904.1"/>
    <property type="status" value="ALT_INIT"/>
    <property type="molecule type" value="mRNA"/>
</dbReference>
<dbReference type="RefSeq" id="NP_200615.1">
    <property type="nucleotide sequence ID" value="NM_125192.4"/>
</dbReference>
<dbReference type="PDB" id="8WB2">
    <property type="method" value="X-ray"/>
    <property type="resolution" value="1.90 A"/>
    <property type="chains" value="A=1-186"/>
</dbReference>
<dbReference type="PDBsum" id="8WB2"/>
<dbReference type="SMR" id="Q9FGT8"/>
<dbReference type="FunCoup" id="Q9FGT8">
    <property type="interactions" value="150"/>
</dbReference>
<dbReference type="STRING" id="3702.Q9FGT8"/>
<dbReference type="MetOSite" id="Q9FGT8"/>
<dbReference type="PaxDb" id="3702-AT5G58070.1"/>
<dbReference type="ProMEX" id="Q9FGT8"/>
<dbReference type="ProteomicsDB" id="234374"/>
<dbReference type="EnsemblPlants" id="AT5G58070.1">
    <property type="protein sequence ID" value="AT5G58070.1"/>
    <property type="gene ID" value="AT5G58070"/>
</dbReference>
<dbReference type="GeneID" id="835919"/>
<dbReference type="Gramene" id="AT5G58070.1">
    <property type="protein sequence ID" value="AT5G58070.1"/>
    <property type="gene ID" value="AT5G58070"/>
</dbReference>
<dbReference type="KEGG" id="ath:AT5G58070"/>
<dbReference type="Araport" id="AT5G58070"/>
<dbReference type="TAIR" id="AT5G58070">
    <property type="gene designation" value="TIL"/>
</dbReference>
<dbReference type="eggNOG" id="KOG4824">
    <property type="taxonomic scope" value="Eukaryota"/>
</dbReference>
<dbReference type="HOGENOM" id="CLU_068449_3_1_1"/>
<dbReference type="InParanoid" id="Q9FGT8"/>
<dbReference type="OMA" id="AQTYRWG"/>
<dbReference type="OrthoDB" id="565904at2759"/>
<dbReference type="PhylomeDB" id="Q9FGT8"/>
<dbReference type="CD-CODE" id="4299E36E">
    <property type="entry name" value="Nucleolus"/>
</dbReference>
<dbReference type="PRO" id="PR:Q9FGT8"/>
<dbReference type="Proteomes" id="UP000006548">
    <property type="component" value="Chromosome 5"/>
</dbReference>
<dbReference type="ExpressionAtlas" id="Q9FGT8">
    <property type="expression patterns" value="baseline and differential"/>
</dbReference>
<dbReference type="GO" id="GO:0009941">
    <property type="term" value="C:chloroplast envelope"/>
    <property type="evidence" value="ECO:0000314"/>
    <property type="project" value="UniProtKB"/>
</dbReference>
<dbReference type="GO" id="GO:0031969">
    <property type="term" value="C:chloroplast membrane"/>
    <property type="evidence" value="ECO:0007669"/>
    <property type="project" value="UniProtKB-SubCell"/>
</dbReference>
<dbReference type="GO" id="GO:0005737">
    <property type="term" value="C:cytoplasm"/>
    <property type="evidence" value="ECO:0000314"/>
    <property type="project" value="UniProtKB"/>
</dbReference>
<dbReference type="GO" id="GO:0009898">
    <property type="term" value="C:cytoplasmic side of plasma membrane"/>
    <property type="evidence" value="ECO:0000314"/>
    <property type="project" value="UniProtKB"/>
</dbReference>
<dbReference type="GO" id="GO:0005829">
    <property type="term" value="C:cytosol"/>
    <property type="evidence" value="ECO:0007005"/>
    <property type="project" value="TAIR"/>
</dbReference>
<dbReference type="GO" id="GO:0005783">
    <property type="term" value="C:endoplasmic reticulum"/>
    <property type="evidence" value="ECO:0007005"/>
    <property type="project" value="TAIR"/>
</dbReference>
<dbReference type="GO" id="GO:0005794">
    <property type="term" value="C:Golgi apparatus"/>
    <property type="evidence" value="ECO:0007005"/>
    <property type="project" value="TAIR"/>
</dbReference>
<dbReference type="GO" id="GO:0005739">
    <property type="term" value="C:mitochondrion"/>
    <property type="evidence" value="ECO:0007005"/>
    <property type="project" value="TAIR"/>
</dbReference>
<dbReference type="GO" id="GO:0000325">
    <property type="term" value="C:plant-type vacuole"/>
    <property type="evidence" value="ECO:0007005"/>
    <property type="project" value="TAIR"/>
</dbReference>
<dbReference type="GO" id="GO:0005886">
    <property type="term" value="C:plasma membrane"/>
    <property type="evidence" value="ECO:0000314"/>
    <property type="project" value="TAIR"/>
</dbReference>
<dbReference type="GO" id="GO:0009506">
    <property type="term" value="C:plasmodesma"/>
    <property type="evidence" value="ECO:0007005"/>
    <property type="project" value="TAIR"/>
</dbReference>
<dbReference type="GO" id="GO:0009536">
    <property type="term" value="C:plastid"/>
    <property type="evidence" value="ECO:0007005"/>
    <property type="project" value="TAIR"/>
</dbReference>
<dbReference type="GO" id="GO:0045735">
    <property type="term" value="F:nutrient reservoir activity"/>
    <property type="evidence" value="ECO:0007669"/>
    <property type="project" value="UniProtKB-KW"/>
</dbReference>
<dbReference type="GO" id="GO:0071456">
    <property type="term" value="P:cellular response to hypoxia"/>
    <property type="evidence" value="ECO:0007007"/>
    <property type="project" value="TAIR"/>
</dbReference>
<dbReference type="GO" id="GO:0010286">
    <property type="term" value="P:heat acclimation"/>
    <property type="evidence" value="ECO:0000315"/>
    <property type="project" value="UniProtKB"/>
</dbReference>
<dbReference type="GO" id="GO:0042538">
    <property type="term" value="P:hyperosmotic salinity response"/>
    <property type="evidence" value="ECO:0000315"/>
    <property type="project" value="UniProtKB"/>
</dbReference>
<dbReference type="GO" id="GO:0030644">
    <property type="term" value="P:intracellular chloride ion homeostasis"/>
    <property type="evidence" value="ECO:0000315"/>
    <property type="project" value="UniProtKB"/>
</dbReference>
<dbReference type="GO" id="GO:0006883">
    <property type="term" value="P:intracellular sodium ion homeostasis"/>
    <property type="evidence" value="ECO:0000315"/>
    <property type="project" value="UniProtKB"/>
</dbReference>
<dbReference type="GO" id="GO:0006629">
    <property type="term" value="P:lipid metabolic process"/>
    <property type="evidence" value="ECO:0007669"/>
    <property type="project" value="UniProtKB-KW"/>
</dbReference>
<dbReference type="GO" id="GO:1902884">
    <property type="term" value="P:positive regulation of response to oxidative stress"/>
    <property type="evidence" value="ECO:0000315"/>
    <property type="project" value="UniProtKB"/>
</dbReference>
<dbReference type="GO" id="GO:1901002">
    <property type="term" value="P:positive regulation of response to salt stress"/>
    <property type="evidence" value="ECO:0000315"/>
    <property type="project" value="UniProtKB"/>
</dbReference>
<dbReference type="GO" id="GO:0009409">
    <property type="term" value="P:response to cold"/>
    <property type="evidence" value="ECO:0000270"/>
    <property type="project" value="TAIR"/>
</dbReference>
<dbReference type="GO" id="GO:0050826">
    <property type="term" value="P:response to freezing"/>
    <property type="evidence" value="ECO:0000315"/>
    <property type="project" value="UniProtKB"/>
</dbReference>
<dbReference type="GO" id="GO:0009408">
    <property type="term" value="P:response to heat"/>
    <property type="evidence" value="ECO:0000315"/>
    <property type="project" value="UniProtKB"/>
</dbReference>
<dbReference type="GO" id="GO:0009644">
    <property type="term" value="P:response to high light intensity"/>
    <property type="evidence" value="ECO:0000315"/>
    <property type="project" value="UniProtKB"/>
</dbReference>
<dbReference type="GO" id="GO:0009416">
    <property type="term" value="P:response to light stimulus"/>
    <property type="evidence" value="ECO:0000315"/>
    <property type="project" value="TAIR"/>
</dbReference>
<dbReference type="GO" id="GO:1901562">
    <property type="term" value="P:response to paraquat"/>
    <property type="evidence" value="ECO:0000315"/>
    <property type="project" value="UniProtKB"/>
</dbReference>
<dbReference type="GO" id="GO:0009414">
    <property type="term" value="P:response to water deprivation"/>
    <property type="evidence" value="ECO:0000270"/>
    <property type="project" value="UniProtKB"/>
</dbReference>
<dbReference type="GO" id="GO:0010431">
    <property type="term" value="P:seed maturation"/>
    <property type="evidence" value="ECO:0000315"/>
    <property type="project" value="UniProtKB"/>
</dbReference>
<dbReference type="CDD" id="cd19438">
    <property type="entry name" value="lipocalin_Blc-like"/>
    <property type="match status" value="1"/>
</dbReference>
<dbReference type="FunFam" id="2.40.128.20:FF:000009">
    <property type="entry name" value="Temperature-induced lipocalin"/>
    <property type="match status" value="1"/>
</dbReference>
<dbReference type="Gene3D" id="2.40.128.20">
    <property type="match status" value="1"/>
</dbReference>
<dbReference type="InterPro" id="IPR012674">
    <property type="entry name" value="Calycin"/>
</dbReference>
<dbReference type="InterPro" id="IPR022271">
    <property type="entry name" value="Lipocalin_ApoD"/>
</dbReference>
<dbReference type="InterPro" id="IPR002446">
    <property type="entry name" value="Lipocalin_bac"/>
</dbReference>
<dbReference type="InterPro" id="IPR047202">
    <property type="entry name" value="Lipocalin_Blc-like_dom"/>
</dbReference>
<dbReference type="InterPro" id="IPR022272">
    <property type="entry name" value="Lipocalin_CS"/>
</dbReference>
<dbReference type="InterPro" id="IPR000566">
    <property type="entry name" value="Lipocln_cytosolic_FA-bd_dom"/>
</dbReference>
<dbReference type="PANTHER" id="PTHR10612">
    <property type="entry name" value="APOLIPOPROTEIN D"/>
    <property type="match status" value="1"/>
</dbReference>
<dbReference type="PANTHER" id="PTHR10612:SF34">
    <property type="entry name" value="APOLIPOPROTEIN D"/>
    <property type="match status" value="1"/>
</dbReference>
<dbReference type="Pfam" id="PF08212">
    <property type="entry name" value="Lipocalin_2"/>
    <property type="match status" value="1"/>
</dbReference>
<dbReference type="PIRSF" id="PIRSF036893">
    <property type="entry name" value="Lipocalin_ApoD"/>
    <property type="match status" value="1"/>
</dbReference>
<dbReference type="PRINTS" id="PR01171">
    <property type="entry name" value="BCTLIPOCALIN"/>
</dbReference>
<dbReference type="SUPFAM" id="SSF50814">
    <property type="entry name" value="Lipocalins"/>
    <property type="match status" value="1"/>
</dbReference>
<dbReference type="PROSITE" id="PS00213">
    <property type="entry name" value="LIPOCALIN"/>
    <property type="match status" value="1"/>
</dbReference>
<sequence length="186" mass="21434">MTEKKEMEVVKGLNVERYMGRWYEIASFPSRFQPKNGVDTRATYTLNPDGTIHVLNETWSNGKRGFIEGSAYKADPKSDEAKLKVKFYVPPFLPIIPVTGDYWVLYIDPDYQHALIGQPSRSYLWILSRTAQMEEETYKQLVEKAVEEGYDISKLHKTPQSDTPPESNTAPEDSKGVWWFKSLFGK</sequence>
<comment type="function">
    <text evidence="4 5 6 7 8">Involved in basal (BT) and acquired thermotolerance (AT), probably by preventing plasma membrane lipids peroxidation induced by severe heat-shock (HS) (PubMed:19302169, PubMed:23837879). Lipocalin that confers protection against oxidative stress caused by heat, freezing, paraquat and light (PubMed:18671872, PubMed:19302169). Confers resistance to high salt (NaCl) levels, probably by protecting chloroplasts from ion toxicity via ion homeostasis maintenance (PubMed:20959419, PubMed:24028869). Required for seed longevity by ensuring polyunsaturated lipids integrity (PubMed:23837879).</text>
</comment>
<comment type="subcellular location">
    <subcellularLocation>
        <location evidence="5 7 8 9">Cell membrane</location>
        <topology evidence="5 8 9">Peripheral membrane protein</topology>
        <orientation evidence="5 8">Cytoplasmic side</orientation>
    </subcellularLocation>
    <subcellularLocation>
        <location evidence="8">Cytoplasm</location>
    </subcellularLocation>
    <subcellularLocation>
        <location evidence="8">Plastid</location>
        <location evidence="8">Chloroplast membrane</location>
        <topology evidence="8">Peripheral membrane protein</topology>
        <orientation evidence="8">Cytoplasmic side</orientation>
    </subcellularLocation>
    <text evidence="8">Translocates from cell membrane to cytoplasm upon salinity stress. A small fraction is associated with the chloroplast envelope.</text>
</comment>
<comment type="tissue specificity">
    <text evidence="4 5 7">Expressed ubiquitously at similar levels, except in dry seeds (at protein level) (PubMed:18671872, PubMed:19302169). Present in seeds (PubMed:23837879).</text>
</comment>
<comment type="induction">
    <text evidence="2 3">By drought and heat combination stress (PubMed:15047901). Accumulates upon treatment with 50 mM (beta-D -Glc)(3), a Yariv phenylglycoside that aggregates arabinogalactan-proteins (AGPs) (PubMed:15235117).</text>
</comment>
<comment type="domain">
    <text evidence="9">The HPR motif (90-97) is required for intracellular targeting at membranes.</text>
</comment>
<comment type="disruption phenotype">
    <text evidence="4 5 6 7 8">Increased sensitivity to sudden drops in temperature and paraquat treatment. Dark-grown plants die shortly after transfer to light. These phenotypes are associated with an accumulation of hydrogen peroxide and other ROS, which causes an oxidative stress that leads to a reduction in hypocotyl growth and sensitivity to light (PubMed:18671872). Severe defects in basal (BT) and acquired thermotolerance (AT) leading to death within 7 days. Stronger sensitivity to tert-butyl hydroperoxide, a reagent that induces lipid peroxidation (PubMed:19302169). Stronger sensitivity to high salt levels (NaCl) associated with membrane injury, chlorophyll b degradation and accumulation of chloride and sodium in chloroplasts (PubMed:20959419, PubMed:24028869). When associated with disruption in CHL, highly sensitive to temperature, drought and light stresses than the single mutants, exhibiting intense lipid peroxidation. Seeds of this double mutant are very sensitive to natural and artificial aging, associated with the oxidation of polyunsaturated lipids (PubMed:23837879).</text>
</comment>
<comment type="similarity">
    <text evidence="11">Belongs to the calycin superfamily. Lipocalin family.</text>
</comment>
<comment type="sequence caution" evidence="11">
    <conflict type="erroneous initiation">
        <sequence resource="EMBL-CDS" id="AAM62904"/>
    </conflict>
    <text>Truncated N-terminus.</text>
</comment>
<organism evidence="15">
    <name type="scientific">Arabidopsis thaliana</name>
    <name type="common">Mouse-ear cress</name>
    <dbReference type="NCBI Taxonomy" id="3702"/>
    <lineage>
        <taxon>Eukaryota</taxon>
        <taxon>Viridiplantae</taxon>
        <taxon>Streptophyta</taxon>
        <taxon>Embryophyta</taxon>
        <taxon>Tracheophyta</taxon>
        <taxon>Spermatophyta</taxon>
        <taxon>Magnoliopsida</taxon>
        <taxon>eudicotyledons</taxon>
        <taxon>Gunneridae</taxon>
        <taxon>Pentapetalae</taxon>
        <taxon>rosids</taxon>
        <taxon>malvids</taxon>
        <taxon>Brassicales</taxon>
        <taxon>Brassicaceae</taxon>
        <taxon>Camelineae</taxon>
        <taxon>Arabidopsis</taxon>
    </lineage>
</organism>
<keyword id="KW-0002">3D-structure</keyword>
<keyword id="KW-1003">Cell membrane</keyword>
<keyword id="KW-0150">Chloroplast</keyword>
<keyword id="KW-0963">Cytoplasm</keyword>
<keyword id="KW-0443">Lipid metabolism</keyword>
<keyword id="KW-0449">Lipoprotein</keyword>
<keyword id="KW-0472">Membrane</keyword>
<keyword id="KW-0934">Plastid</keyword>
<keyword id="KW-1185">Reference proteome</keyword>
<keyword id="KW-0708">Seed storage protein</keyword>
<keyword id="KW-0758">Storage protein</keyword>
<proteinExistence type="evidence at protein level"/>
<accession>Q9FGT8</accession>
<accession>Q8LE12</accession>
<gene>
    <name evidence="10" type="primary">TIL</name>
    <name evidence="14" type="ordered locus">At5g58070</name>
    <name evidence="13" type="ORF">K21L19.6</name>
</gene>
<protein>
    <recommendedName>
        <fullName evidence="10">Temperature-induced lipocalin-1</fullName>
        <shortName evidence="10">AtTIL1</shortName>
    </recommendedName>
</protein>
<reference key="1">
    <citation type="journal article" date="2000" name="DNA Res.">
        <title>Structural analysis of Arabidopsis thaliana chromosome 5. X. Sequence features of the regions of 3,076,755 bp covered by sixty P1 and TAC clones.</title>
        <authorList>
            <person name="Sato S."/>
            <person name="Nakamura Y."/>
            <person name="Kaneko T."/>
            <person name="Katoh T."/>
            <person name="Asamizu E."/>
            <person name="Kotani H."/>
            <person name="Tabata S."/>
        </authorList>
    </citation>
    <scope>NUCLEOTIDE SEQUENCE [LARGE SCALE GENOMIC DNA]</scope>
    <source>
        <strain>cv. Columbia</strain>
    </source>
</reference>
<reference key="2">
    <citation type="journal article" date="2017" name="Plant J.">
        <title>Araport11: a complete reannotation of the Arabidopsis thaliana reference genome.</title>
        <authorList>
            <person name="Cheng C.Y."/>
            <person name="Krishnakumar V."/>
            <person name="Chan A.P."/>
            <person name="Thibaud-Nissen F."/>
            <person name="Schobel S."/>
            <person name="Town C.D."/>
        </authorList>
    </citation>
    <scope>GENOME REANNOTATION</scope>
    <source>
        <strain>cv. Columbia</strain>
    </source>
</reference>
<reference key="3">
    <citation type="journal article" date="2003" name="Science">
        <title>Empirical analysis of transcriptional activity in the Arabidopsis genome.</title>
        <authorList>
            <person name="Yamada K."/>
            <person name="Lim J."/>
            <person name="Dale J.M."/>
            <person name="Chen H."/>
            <person name="Shinn P."/>
            <person name="Palm C.J."/>
            <person name="Southwick A.M."/>
            <person name="Wu H.C."/>
            <person name="Kim C.J."/>
            <person name="Nguyen M."/>
            <person name="Pham P.K."/>
            <person name="Cheuk R.F."/>
            <person name="Karlin-Newmann G."/>
            <person name="Liu S.X."/>
            <person name="Lam B."/>
            <person name="Sakano H."/>
            <person name="Wu T."/>
            <person name="Yu G."/>
            <person name="Miranda M."/>
            <person name="Quach H.L."/>
            <person name="Tripp M."/>
            <person name="Chang C.H."/>
            <person name="Lee J.M."/>
            <person name="Toriumi M.J."/>
            <person name="Chan M.M."/>
            <person name="Tang C.C."/>
            <person name="Onodera C.S."/>
            <person name="Deng J.M."/>
            <person name="Akiyama K."/>
            <person name="Ansari Y."/>
            <person name="Arakawa T."/>
            <person name="Banh J."/>
            <person name="Banno F."/>
            <person name="Bowser L."/>
            <person name="Brooks S.Y."/>
            <person name="Carninci P."/>
            <person name="Chao Q."/>
            <person name="Choy N."/>
            <person name="Enju A."/>
            <person name="Goldsmith A.D."/>
            <person name="Gurjal M."/>
            <person name="Hansen N.F."/>
            <person name="Hayashizaki Y."/>
            <person name="Johnson-Hopson C."/>
            <person name="Hsuan V.W."/>
            <person name="Iida K."/>
            <person name="Karnes M."/>
            <person name="Khan S."/>
            <person name="Koesema E."/>
            <person name="Ishida J."/>
            <person name="Jiang P.X."/>
            <person name="Jones T."/>
            <person name="Kawai J."/>
            <person name="Kamiya A."/>
            <person name="Meyers C."/>
            <person name="Nakajima M."/>
            <person name="Narusaka M."/>
            <person name="Seki M."/>
            <person name="Sakurai T."/>
            <person name="Satou M."/>
            <person name="Tamse R."/>
            <person name="Vaysberg M."/>
            <person name="Wallender E.K."/>
            <person name="Wong C."/>
            <person name="Yamamura Y."/>
            <person name="Yuan S."/>
            <person name="Shinozaki K."/>
            <person name="Davis R.W."/>
            <person name="Theologis A."/>
            <person name="Ecker J.R."/>
        </authorList>
    </citation>
    <scope>NUCLEOTIDE SEQUENCE [LARGE SCALE MRNA]</scope>
    <source>
        <strain>cv. Columbia</strain>
    </source>
</reference>
<reference key="4">
    <citation type="submission" date="2002-03" db="EMBL/GenBank/DDBJ databases">
        <title>Full-length cDNA from Arabidopsis thaliana.</title>
        <authorList>
            <person name="Brover V.V."/>
            <person name="Troukhan M.E."/>
            <person name="Alexandrov N.A."/>
            <person name="Lu Y.-P."/>
            <person name="Flavell R.B."/>
            <person name="Feldmann K.A."/>
        </authorList>
    </citation>
    <scope>NUCLEOTIDE SEQUENCE [LARGE SCALE MRNA]</scope>
</reference>
<reference key="5">
    <citation type="journal article" date="2004" name="Plant Physiol.">
        <title>When defense pathways collide. The response of Arabidopsis to a combination of drought and heat stress.</title>
        <authorList>
            <person name="Rizhsky L."/>
            <person name="Liang H."/>
            <person name="Shuman J."/>
            <person name="Shulaev V."/>
            <person name="Davletova S."/>
            <person name="Mittler R."/>
        </authorList>
    </citation>
    <scope>INDUCTION BY DROUGHT AND HEAT</scope>
</reference>
<reference key="6">
    <citation type="journal article" date="2004" name="Plant Physiol.">
        <title>Binding of arabinogalactan proteins by Yariv phenylglycoside triggers wound-like responses in Arabidopsis cell cultures.</title>
        <authorList>
            <person name="Guan Y."/>
            <person name="Nothnagel E.A."/>
        </authorList>
    </citation>
    <scope>INDUCTION BY YARIV PHENYLGLYCOSIDE</scope>
</reference>
<reference key="7">
    <citation type="journal article" date="2008" name="BMC Plant Biol.">
        <title>The plant Apolipoprotein D ortholog protects Arabidopsis against oxidative stress.</title>
        <authorList>
            <person name="Charron J.-B.F."/>
            <person name="Ouellet F."/>
            <person name="Houde M."/>
            <person name="Sarhan F."/>
        </authorList>
    </citation>
    <scope>FUNCTION</scope>
    <scope>DISRUPTION PHENOTYPE</scope>
    <scope>TISSUE SPECIFICITY</scope>
    <source>
        <strain>cv. Columbia</strain>
    </source>
</reference>
<reference key="8">
    <citation type="journal article" date="2009" name="Plant Cell Environ.">
        <title>Temperature-induced lipocalin is required for basal and acquired thermotolerance in Arabidopsis.</title>
        <authorList>
            <person name="Chi W.T."/>
            <person name="Fung R.W."/>
            <person name="Liu H.C."/>
            <person name="Hsu C.C."/>
            <person name="Charng Y.Y."/>
        </authorList>
    </citation>
    <scope>FUNCTION</scope>
    <scope>DISRUPTION PHENOTYPE</scope>
    <scope>SUBCELLULAR LOCATION</scope>
    <scope>TISSUE SPECIFICITY</scope>
    <source>
        <strain>cv. Columbia</strain>
    </source>
</reference>
<reference key="9">
    <citation type="journal article" date="2010" name="Plant Physiol.">
        <title>Linking the salt transcriptome with physiological responses of a salt-resistant Populus species as a strategy to identify genes important for stress acclimation.</title>
        <authorList>
            <person name="Brinker M."/>
            <person name="Brosche M."/>
            <person name="Vinocur B."/>
            <person name="Abo-Ogiala A."/>
            <person name="Fayyaz P."/>
            <person name="Janz D."/>
            <person name="Ottow E.A."/>
            <person name="Cullmann A.D."/>
            <person name="Saborowski J."/>
            <person name="Kangasjarvi J."/>
            <person name="Altman A."/>
            <person name="Polle A."/>
        </authorList>
    </citation>
    <scope>FUNCTION</scope>
    <scope>DISRUPTION PHENOTYPE</scope>
</reference>
<reference key="10">
    <citation type="journal article" date="2014" name="J. Plant Physiol.">
        <title>Temperature-induced lipocalin (TIL) is translocated under salt stress and protects chloroplasts from ion toxicity.</title>
        <authorList>
            <person name="Abo-Ogiala A."/>
            <person name="Carsjens C."/>
            <person name="Diekmann H."/>
            <person name="Fayyaz P."/>
            <person name="Herrfurth C."/>
            <person name="Feussner I."/>
            <person name="Polle A."/>
        </authorList>
    </citation>
    <scope>FUNCTION</scope>
    <scope>DISRUPTION PHENOTYPE</scope>
    <scope>SUBCELLULAR LOCATION</scope>
    <source>
        <strain>cv. Columbia</strain>
    </source>
</reference>
<reference key="11">
    <citation type="journal article" date="2014" name="Plant Cell Environ.">
        <title>Arabidopsis lipocalins AtCHL and AtTIL have distinct but overlapping functions essential for lipid protection and seed longevity.</title>
        <authorList>
            <person name="Boca S."/>
            <person name="Koestler F."/>
            <person name="Ksas B."/>
            <person name="Chevalier A."/>
            <person name="Leymarie J."/>
            <person name="Fekete A."/>
            <person name="Mueller M.J."/>
            <person name="Havaux M."/>
        </authorList>
    </citation>
    <scope>FUNCTION</scope>
    <scope>DISRUPTION PHENOTYPE</scope>
    <scope>SUBCELLULAR LOCATION</scope>
    <scope>TISSUE SPECIFICITY</scope>
    <source>
        <strain>cv. Columbia</strain>
    </source>
</reference>
<reference key="12">
    <citation type="journal article" date="2015" name="Plant Mol. Biol.">
        <title>A hydrophobic proline-rich motif is involved in the intracellular targeting of temperature-induced lipocalin.</title>
        <authorList>
            <person name="Hernandez-Gras F."/>
            <person name="Boronat A."/>
        </authorList>
    </citation>
    <scope>SUBCELLULAR LOCATION</scope>
    <scope>HPR MOTIF</scope>
    <scope>DOMAIN</scope>
    <scope>MUTAGENESIS OF PRO-90; PRO-91; 92-PHE--ILE-96; PRO-94 AND PRO-97</scope>
</reference>
<name>TIL_ARATH</name>
<evidence type="ECO:0000256" key="1">
    <source>
        <dbReference type="SAM" id="MobiDB-lite"/>
    </source>
</evidence>
<evidence type="ECO:0000269" key="2">
    <source>
    </source>
</evidence>
<evidence type="ECO:0000269" key="3">
    <source>
    </source>
</evidence>
<evidence type="ECO:0000269" key="4">
    <source>
    </source>
</evidence>
<evidence type="ECO:0000269" key="5">
    <source>
    </source>
</evidence>
<evidence type="ECO:0000269" key="6">
    <source>
    </source>
</evidence>
<evidence type="ECO:0000269" key="7">
    <source>
    </source>
</evidence>
<evidence type="ECO:0000269" key="8">
    <source>
    </source>
</evidence>
<evidence type="ECO:0000269" key="9">
    <source>
    </source>
</evidence>
<evidence type="ECO:0000303" key="10">
    <source>
    </source>
</evidence>
<evidence type="ECO:0000305" key="11"/>
<evidence type="ECO:0000305" key="12">
    <source>
    </source>
</evidence>
<evidence type="ECO:0000312" key="13">
    <source>
        <dbReference type="EMBL" id="AAL32867.1"/>
    </source>
</evidence>
<evidence type="ECO:0000312" key="14">
    <source>
        <dbReference type="EMBL" id="AED96994.1"/>
    </source>
</evidence>
<evidence type="ECO:0000312" key="15">
    <source>
        <dbReference type="Proteomes" id="UP000006548"/>
    </source>
</evidence>
<evidence type="ECO:0007829" key="16">
    <source>
        <dbReference type="PDB" id="8WB2"/>
    </source>
</evidence>
<feature type="chain" id="PRO_0000434134" description="Temperature-induced lipocalin-1">
    <location>
        <begin position="1"/>
        <end position="186"/>
    </location>
</feature>
<feature type="region of interest" description="Disordered" evidence="1">
    <location>
        <begin position="154"/>
        <end position="174"/>
    </location>
</feature>
<feature type="short sequence motif" description="HPR (Hydrophobic proline-rich)" evidence="12">
    <location>
        <begin position="90"/>
        <end position="97"/>
    </location>
</feature>
<feature type="compositionally biased region" description="Polar residues" evidence="1">
    <location>
        <begin position="158"/>
        <end position="171"/>
    </location>
</feature>
<feature type="mutagenesis site" description="Partially altered subcellular localization." evidence="9">
    <original>P</original>
    <variation>V</variation>
    <location>
        <position position="90"/>
    </location>
</feature>
<feature type="mutagenesis site" description="Partially altered subcellular localization." evidence="9">
    <original>P</original>
    <variation>V</variation>
    <location>
        <position position="91"/>
    </location>
</feature>
<feature type="mutagenesis site" description="Impaired subcellular localization." evidence="9">
    <original>FLPII</original>
    <variation>SAPAR</variation>
    <location>
        <begin position="92"/>
        <end position="96"/>
    </location>
</feature>
<feature type="mutagenesis site" description="Impaired subcellular localization." evidence="9">
    <original>P</original>
    <variation>V</variation>
    <location>
        <position position="94"/>
    </location>
</feature>
<feature type="mutagenesis site" description="Partially altered subcellular localization." evidence="9">
    <original>P</original>
    <variation>V</variation>
    <location>
        <position position="97"/>
    </location>
</feature>
<feature type="helix" evidence="16">
    <location>
        <begin position="15"/>
        <end position="18"/>
    </location>
</feature>
<feature type="strand" evidence="16">
    <location>
        <begin position="20"/>
        <end position="28"/>
    </location>
</feature>
<feature type="strand" evidence="16">
    <location>
        <begin position="38"/>
        <end position="46"/>
    </location>
</feature>
<feature type="strand" evidence="16">
    <location>
        <begin position="52"/>
        <end position="60"/>
    </location>
</feature>
<feature type="strand" evidence="16">
    <location>
        <begin position="63"/>
        <end position="75"/>
    </location>
</feature>
<feature type="strand" evidence="16">
    <location>
        <begin position="82"/>
        <end position="90"/>
    </location>
</feature>
<feature type="strand" evidence="16">
    <location>
        <begin position="96"/>
        <end position="107"/>
    </location>
</feature>
<feature type="strand" evidence="16">
    <location>
        <begin position="113"/>
        <end position="117"/>
    </location>
</feature>
<feature type="strand" evidence="16">
    <location>
        <begin position="124"/>
        <end position="132"/>
    </location>
</feature>
<feature type="helix" evidence="16">
    <location>
        <begin position="135"/>
        <end position="147"/>
    </location>
</feature>
<feature type="helix" evidence="16">
    <location>
        <begin position="177"/>
        <end position="182"/>
    </location>
</feature>